<name>SDHFB_DICDI</name>
<accession>Q55BM0</accession>
<protein>
    <recommendedName>
        <fullName evidence="1">Succinate dehydrogenase assembly factor 1B, mitochondrial</fullName>
        <shortName evidence="1">SDH assembly factor 1B</shortName>
        <shortName evidence="1">SDHAF1B</shortName>
    </recommendedName>
</protein>
<organism>
    <name type="scientific">Dictyostelium discoideum</name>
    <name type="common">Social amoeba</name>
    <dbReference type="NCBI Taxonomy" id="44689"/>
    <lineage>
        <taxon>Eukaryota</taxon>
        <taxon>Amoebozoa</taxon>
        <taxon>Evosea</taxon>
        <taxon>Eumycetozoa</taxon>
        <taxon>Dictyostelia</taxon>
        <taxon>Dictyosteliales</taxon>
        <taxon>Dictyosteliaceae</taxon>
        <taxon>Dictyostelium</taxon>
    </lineage>
</organism>
<gene>
    <name evidence="4" type="primary">sdhaf1B</name>
    <name type="ORF">DDB_G0270818</name>
</gene>
<feature type="chain" id="PRO_0000383347" description="Succinate dehydrogenase assembly factor 1B, mitochondrial">
    <location>
        <begin position="1"/>
        <end position="111"/>
    </location>
</feature>
<reference key="1">
    <citation type="journal article" date="2005" name="Nature">
        <title>The genome of the social amoeba Dictyostelium discoideum.</title>
        <authorList>
            <person name="Eichinger L."/>
            <person name="Pachebat J.A."/>
            <person name="Gloeckner G."/>
            <person name="Rajandream M.A."/>
            <person name="Sucgang R."/>
            <person name="Berriman M."/>
            <person name="Song J."/>
            <person name="Olsen R."/>
            <person name="Szafranski K."/>
            <person name="Xu Q."/>
            <person name="Tunggal B."/>
            <person name="Kummerfeld S."/>
            <person name="Madera M."/>
            <person name="Konfortov B.A."/>
            <person name="Rivero F."/>
            <person name="Bankier A.T."/>
            <person name="Lehmann R."/>
            <person name="Hamlin N."/>
            <person name="Davies R."/>
            <person name="Gaudet P."/>
            <person name="Fey P."/>
            <person name="Pilcher K."/>
            <person name="Chen G."/>
            <person name="Saunders D."/>
            <person name="Sodergren E.J."/>
            <person name="Davis P."/>
            <person name="Kerhornou A."/>
            <person name="Nie X."/>
            <person name="Hall N."/>
            <person name="Anjard C."/>
            <person name="Hemphill L."/>
            <person name="Bason N."/>
            <person name="Farbrother P."/>
            <person name="Desany B."/>
            <person name="Just E."/>
            <person name="Morio T."/>
            <person name="Rost R."/>
            <person name="Churcher C.M."/>
            <person name="Cooper J."/>
            <person name="Haydock S."/>
            <person name="van Driessche N."/>
            <person name="Cronin A."/>
            <person name="Goodhead I."/>
            <person name="Muzny D.M."/>
            <person name="Mourier T."/>
            <person name="Pain A."/>
            <person name="Lu M."/>
            <person name="Harper D."/>
            <person name="Lindsay R."/>
            <person name="Hauser H."/>
            <person name="James K.D."/>
            <person name="Quiles M."/>
            <person name="Madan Babu M."/>
            <person name="Saito T."/>
            <person name="Buchrieser C."/>
            <person name="Wardroper A."/>
            <person name="Felder M."/>
            <person name="Thangavelu M."/>
            <person name="Johnson D."/>
            <person name="Knights A."/>
            <person name="Loulseged H."/>
            <person name="Mungall K.L."/>
            <person name="Oliver K."/>
            <person name="Price C."/>
            <person name="Quail M.A."/>
            <person name="Urushihara H."/>
            <person name="Hernandez J."/>
            <person name="Rabbinowitsch E."/>
            <person name="Steffen D."/>
            <person name="Sanders M."/>
            <person name="Ma J."/>
            <person name="Kohara Y."/>
            <person name="Sharp S."/>
            <person name="Simmonds M.N."/>
            <person name="Spiegler S."/>
            <person name="Tivey A."/>
            <person name="Sugano S."/>
            <person name="White B."/>
            <person name="Walker D."/>
            <person name="Woodward J.R."/>
            <person name="Winckler T."/>
            <person name="Tanaka Y."/>
            <person name="Shaulsky G."/>
            <person name="Schleicher M."/>
            <person name="Weinstock G.M."/>
            <person name="Rosenthal A."/>
            <person name="Cox E.C."/>
            <person name="Chisholm R.L."/>
            <person name="Gibbs R.A."/>
            <person name="Loomis W.F."/>
            <person name="Platzer M."/>
            <person name="Kay R.R."/>
            <person name="Williams J.G."/>
            <person name="Dear P.H."/>
            <person name="Noegel A.A."/>
            <person name="Barrell B.G."/>
            <person name="Kuspa A."/>
        </authorList>
    </citation>
    <scope>NUCLEOTIDE SEQUENCE [LARGE SCALE GENOMIC DNA]</scope>
    <source>
        <strain>AX4</strain>
    </source>
</reference>
<keyword id="KW-0143">Chaperone</keyword>
<keyword id="KW-0496">Mitochondrion</keyword>
<keyword id="KW-1185">Reference proteome</keyword>
<proteinExistence type="inferred from homology"/>
<sequence length="111" mass="13233">MSSKIIKENKRLVLDLYKRCLYSAKRCPKYQNQMMMESYIKLKFRSNKEIHQKDFETIENLLKQGEEELKSMNDFHELRAKSKSGQDHESILNDCFDDDFNYIGSTPTVKK</sequence>
<comment type="function">
    <text evidence="1">Plays an essential role in the assembly of succinate dehydrogenase (SDH), an enzyme complex (also referred to as respiratory complex II) that is a component of both the tricarboxylic acid (TCA) cycle and the mitochondrial electron transport chain, and which couples the oxidation of succinate to fumarate with the reduction of ubiquinone (coenzyme Q) to ubiquinol. Promotes maturation of the iron-sulfur protein subunit of the SDH catalytic dimer, protecting it from the deleterious effects of oxidants. May act together with SDHAF3.</text>
</comment>
<comment type="subunit">
    <text evidence="2">Interacts with the iron-sulfur protein subunit within the SDH catalytic dimer.</text>
</comment>
<comment type="subcellular location">
    <subcellularLocation>
        <location evidence="1">Mitochondrion matrix</location>
    </subcellularLocation>
</comment>
<comment type="similarity">
    <text evidence="3">Belongs to the complex I LYR family. SDHAF1 subfamily.</text>
</comment>
<evidence type="ECO:0000250" key="1">
    <source>
        <dbReference type="UniProtKB" id="A6NFY7"/>
    </source>
</evidence>
<evidence type="ECO:0000250" key="2">
    <source>
        <dbReference type="UniProtKB" id="Q3E785"/>
    </source>
</evidence>
<evidence type="ECO:0000305" key="3"/>
<evidence type="ECO:0000312" key="4">
    <source>
        <dbReference type="dictyBase" id="DDB_G0270818"/>
    </source>
</evidence>
<dbReference type="EMBL" id="AAFI02000005">
    <property type="protein sequence ID" value="EAL72759.1"/>
    <property type="molecule type" value="Genomic_DNA"/>
</dbReference>
<dbReference type="RefSeq" id="XP_646810.1">
    <property type="nucleotide sequence ID" value="XM_641718.1"/>
</dbReference>
<dbReference type="SMR" id="Q55BM0"/>
<dbReference type="FunCoup" id="Q55BM0">
    <property type="interactions" value="4"/>
</dbReference>
<dbReference type="GlyGen" id="Q55BM0">
    <property type="glycosylation" value="1 site"/>
</dbReference>
<dbReference type="PaxDb" id="44689-DDB0305171"/>
<dbReference type="EnsemblProtists" id="EAL72759">
    <property type="protein sequence ID" value="EAL72759"/>
    <property type="gene ID" value="DDB_G0270818"/>
</dbReference>
<dbReference type="GeneID" id="8617782"/>
<dbReference type="KEGG" id="ddi:DDB_G0270818"/>
<dbReference type="dictyBase" id="DDB_G0270818">
    <property type="gene designation" value="sdhaf1B"/>
</dbReference>
<dbReference type="VEuPathDB" id="AmoebaDB:DDB_G0270818"/>
<dbReference type="eggNOG" id="ENOG502S56S">
    <property type="taxonomic scope" value="Eukaryota"/>
</dbReference>
<dbReference type="HOGENOM" id="CLU_2163165_0_0_1"/>
<dbReference type="InParanoid" id="Q55BM0"/>
<dbReference type="OMA" id="YSAKRCP"/>
<dbReference type="PRO" id="PR:Q55BM0"/>
<dbReference type="Proteomes" id="UP000002195">
    <property type="component" value="Chromosome 1"/>
</dbReference>
<dbReference type="GO" id="GO:0005759">
    <property type="term" value="C:mitochondrial matrix"/>
    <property type="evidence" value="ECO:0007669"/>
    <property type="project" value="UniProtKB-SubCell"/>
</dbReference>
<dbReference type="GO" id="GO:0005739">
    <property type="term" value="C:mitochondrion"/>
    <property type="evidence" value="ECO:0000318"/>
    <property type="project" value="GO_Central"/>
</dbReference>
<dbReference type="GO" id="GO:0034553">
    <property type="term" value="P:mitochondrial respiratory chain complex II assembly"/>
    <property type="evidence" value="ECO:0000318"/>
    <property type="project" value="GO_Central"/>
</dbReference>
<dbReference type="CDD" id="cd20268">
    <property type="entry name" value="Complex1_LYR_SDHAF1_LYRM8"/>
    <property type="match status" value="1"/>
</dbReference>
<dbReference type="InterPro" id="IPR008011">
    <property type="entry name" value="Complex1_LYR_dom"/>
</dbReference>
<dbReference type="InterPro" id="IPR045295">
    <property type="entry name" value="Complex1_LYR_SDHAF1_LYRM8"/>
</dbReference>
<dbReference type="PANTHER" id="PTHR13675">
    <property type="entry name" value="LYR MOTIF-CONTAINING PROTEIN 2"/>
    <property type="match status" value="1"/>
</dbReference>
<dbReference type="PANTHER" id="PTHR13675:SF5">
    <property type="entry name" value="SUCCINATE DEHYDROGENASE ASSEMBLY FACTOR 1B, MITOCHONDRIAL"/>
    <property type="match status" value="1"/>
</dbReference>
<dbReference type="Pfam" id="PF05347">
    <property type="entry name" value="Complex1_LYR"/>
    <property type="match status" value="1"/>
</dbReference>